<keyword id="KW-0058">Aromatic hydrocarbons catabolism</keyword>
<keyword id="KW-0520">NAD</keyword>
<keyword id="KW-0560">Oxidoreductase</keyword>
<keyword id="KW-0614">Plasmid</keyword>
<accession>Q1B0P7</accession>
<sequence>MSHSKVAVIGSGNIGTDLVVKLKKLATNVEIAVLVGIDPSSDGLARARRMGIGTVDTGVQGLIEHAEFDEIDIIFDSTSAKAHLVNEEALRTFGKRLIDLTPAAVGPYVVPAVNLDDHLGAPNVNMVTCGGQATIPIVAAISSVTAVHYAEIVASIASKSAGPGTRSNIDEFTQTTSAAIEKVGGAAHGKAIIVLNPAEPPLIMRDTVLALVTDPDQNRIRQSVIDMVEKVSAYVPGYRLKQEVQFTQLDDAESVATLTGGVDKGPGLWKVAVFLEVEGAAHYLPAYAGNLDIMTSAALQVAERIAANTVQEATR</sequence>
<feature type="chain" id="PRO_0000387687" description="Acetaldehyde dehydrogenase 2">
    <location>
        <begin position="1"/>
        <end position="315"/>
    </location>
</feature>
<feature type="active site" description="Acyl-thioester intermediate" evidence="1">
    <location>
        <position position="129"/>
    </location>
</feature>
<feature type="binding site" evidence="1">
    <location>
        <begin position="11"/>
        <end position="14"/>
    </location>
    <ligand>
        <name>NAD(+)</name>
        <dbReference type="ChEBI" id="CHEBI:57540"/>
    </ligand>
</feature>
<feature type="binding site" evidence="1">
    <location>
        <begin position="160"/>
        <end position="168"/>
    </location>
    <ligand>
        <name>NAD(+)</name>
        <dbReference type="ChEBI" id="CHEBI:57540"/>
    </ligand>
</feature>
<feature type="binding site" evidence="1">
    <location>
        <position position="290"/>
    </location>
    <ligand>
        <name>NAD(+)</name>
        <dbReference type="ChEBI" id="CHEBI:57540"/>
    </ligand>
</feature>
<comment type="catalytic activity">
    <reaction evidence="1">
        <text>acetaldehyde + NAD(+) + CoA = acetyl-CoA + NADH + H(+)</text>
        <dbReference type="Rhea" id="RHEA:23288"/>
        <dbReference type="ChEBI" id="CHEBI:15343"/>
        <dbReference type="ChEBI" id="CHEBI:15378"/>
        <dbReference type="ChEBI" id="CHEBI:57287"/>
        <dbReference type="ChEBI" id="CHEBI:57288"/>
        <dbReference type="ChEBI" id="CHEBI:57540"/>
        <dbReference type="ChEBI" id="CHEBI:57945"/>
        <dbReference type="EC" id="1.2.1.10"/>
    </reaction>
</comment>
<comment type="similarity">
    <text evidence="1">Belongs to the acetaldehyde dehydrogenase family.</text>
</comment>
<geneLocation type="plasmid">
    <name>pMCS1</name>
</geneLocation>
<evidence type="ECO:0000255" key="1">
    <source>
        <dbReference type="HAMAP-Rule" id="MF_01657"/>
    </source>
</evidence>
<proteinExistence type="inferred from homology"/>
<reference key="1">
    <citation type="submission" date="2006-06" db="EMBL/GenBank/DDBJ databases">
        <title>Complete sequence of plasmid of Mycobacterium sp. MCS.</title>
        <authorList>
            <consortium name="US DOE Joint Genome Institute"/>
            <person name="Copeland A."/>
            <person name="Lucas S."/>
            <person name="Lapidus A."/>
            <person name="Barry K."/>
            <person name="Detter J.C."/>
            <person name="Glavina del Rio T."/>
            <person name="Hammon N."/>
            <person name="Israni S."/>
            <person name="Dalin E."/>
            <person name="Tice H."/>
            <person name="Pitluck S."/>
            <person name="Martinez M."/>
            <person name="Schmutz J."/>
            <person name="Larimer F."/>
            <person name="Land M."/>
            <person name="Hauser L."/>
            <person name="Kyrpides N."/>
            <person name="Kim E."/>
            <person name="Miller C.D."/>
            <person name="Hughes J.E."/>
            <person name="Anderson A.J."/>
            <person name="Sims R.C."/>
            <person name="Richardson P."/>
        </authorList>
    </citation>
    <scope>NUCLEOTIDE SEQUENCE [LARGE SCALE GENOMIC DNA]</scope>
    <source>
        <strain>MCS</strain>
    </source>
</reference>
<dbReference type="EC" id="1.2.1.10" evidence="1"/>
<dbReference type="EMBL" id="CP000385">
    <property type="protein sequence ID" value="ABG11537.1"/>
    <property type="molecule type" value="Genomic_DNA"/>
</dbReference>
<dbReference type="SMR" id="Q1B0P7"/>
<dbReference type="KEGG" id="mmc:Mmcs_5437"/>
<dbReference type="HOGENOM" id="CLU_062208_0_0_11"/>
<dbReference type="BioCyc" id="MSP164756:G1G6O-5550-MONOMER"/>
<dbReference type="GO" id="GO:0008774">
    <property type="term" value="F:acetaldehyde dehydrogenase (acetylating) activity"/>
    <property type="evidence" value="ECO:0007669"/>
    <property type="project" value="UniProtKB-UniRule"/>
</dbReference>
<dbReference type="GO" id="GO:0051287">
    <property type="term" value="F:NAD binding"/>
    <property type="evidence" value="ECO:0007669"/>
    <property type="project" value="UniProtKB-UniRule"/>
</dbReference>
<dbReference type="GO" id="GO:0009056">
    <property type="term" value="P:catabolic process"/>
    <property type="evidence" value="ECO:0007669"/>
    <property type="project" value="UniProtKB-KW"/>
</dbReference>
<dbReference type="CDD" id="cd23933">
    <property type="entry name" value="ALDH_C"/>
    <property type="match status" value="1"/>
</dbReference>
<dbReference type="Gene3D" id="3.30.360.10">
    <property type="entry name" value="Dihydrodipicolinate Reductase, domain 2"/>
    <property type="match status" value="1"/>
</dbReference>
<dbReference type="Gene3D" id="3.40.50.720">
    <property type="entry name" value="NAD(P)-binding Rossmann-like Domain"/>
    <property type="match status" value="1"/>
</dbReference>
<dbReference type="HAMAP" id="MF_01657">
    <property type="entry name" value="Ac_ald_DH_ac"/>
    <property type="match status" value="1"/>
</dbReference>
<dbReference type="InterPro" id="IPR003361">
    <property type="entry name" value="Acetaldehyde_dehydrogenase"/>
</dbReference>
<dbReference type="InterPro" id="IPR015426">
    <property type="entry name" value="Acetylaldehyde_DH_C"/>
</dbReference>
<dbReference type="InterPro" id="IPR036291">
    <property type="entry name" value="NAD(P)-bd_dom_sf"/>
</dbReference>
<dbReference type="InterPro" id="IPR000534">
    <property type="entry name" value="Semialdehyde_DH_NAD-bd"/>
</dbReference>
<dbReference type="NCBIfam" id="TIGR03215">
    <property type="entry name" value="ac_ald_DH_ac"/>
    <property type="match status" value="1"/>
</dbReference>
<dbReference type="NCBIfam" id="NF006157">
    <property type="entry name" value="PRK08300.1"/>
    <property type="match status" value="1"/>
</dbReference>
<dbReference type="Pfam" id="PF09290">
    <property type="entry name" value="AcetDehyd-dimer"/>
    <property type="match status" value="1"/>
</dbReference>
<dbReference type="Pfam" id="PF01118">
    <property type="entry name" value="Semialdhyde_dh"/>
    <property type="match status" value="1"/>
</dbReference>
<dbReference type="PIRSF" id="PIRSF015689">
    <property type="entry name" value="Actaldh_dh_actl"/>
    <property type="match status" value="1"/>
</dbReference>
<dbReference type="SMART" id="SM00859">
    <property type="entry name" value="Semialdhyde_dh"/>
    <property type="match status" value="1"/>
</dbReference>
<dbReference type="SUPFAM" id="SSF55347">
    <property type="entry name" value="Glyceraldehyde-3-phosphate dehydrogenase-like, C-terminal domain"/>
    <property type="match status" value="1"/>
</dbReference>
<dbReference type="SUPFAM" id="SSF51735">
    <property type="entry name" value="NAD(P)-binding Rossmann-fold domains"/>
    <property type="match status" value="1"/>
</dbReference>
<organism>
    <name type="scientific">Mycobacterium sp. (strain MCS)</name>
    <dbReference type="NCBI Taxonomy" id="164756"/>
    <lineage>
        <taxon>Bacteria</taxon>
        <taxon>Bacillati</taxon>
        <taxon>Actinomycetota</taxon>
        <taxon>Actinomycetes</taxon>
        <taxon>Mycobacteriales</taxon>
        <taxon>Mycobacteriaceae</taxon>
        <taxon>Mycobacterium</taxon>
    </lineage>
</organism>
<protein>
    <recommendedName>
        <fullName evidence="1">Acetaldehyde dehydrogenase 2</fullName>
        <ecNumber evidence="1">1.2.1.10</ecNumber>
    </recommendedName>
    <alternativeName>
        <fullName evidence="1">Acetaldehyde dehydrogenase [acetylating] 2</fullName>
    </alternativeName>
</protein>
<gene>
    <name type="ordered locus">Mmcs_5437</name>
</gene>
<name>ACDH2_MYCSS</name>